<feature type="transit peptide" description="Chloroplast" evidence="3">
    <location>
        <begin position="1"/>
        <end position="44"/>
    </location>
</feature>
<feature type="chain" id="PRO_0000029371" description="Photosystem I reaction center subunit II-2, chloroplastic">
    <location>
        <begin position="45"/>
        <end position="204"/>
    </location>
</feature>
<feature type="region of interest" description="Disordered" evidence="4">
    <location>
        <begin position="47"/>
        <end position="71"/>
    </location>
</feature>
<feature type="region of interest" description="Ferredoxin and ferredoxin-oxidoreductase binding" evidence="1">
    <location>
        <begin position="137"/>
        <end position="145"/>
    </location>
</feature>
<feature type="modified residue" description="Phosphothreonine" evidence="2">
    <location>
        <position position="47"/>
    </location>
</feature>
<feature type="sequence conflict" description="In Ref. 1; CAB52677." evidence="6" ref="1">
    <original>Y</original>
    <variation>F</variation>
    <location>
        <position position="142"/>
    </location>
</feature>
<feature type="sequence conflict" description="In Ref. 1; CAB52677." evidence="6" ref="1">
    <original>V</original>
    <variation>I</variation>
    <location>
        <position position="166"/>
    </location>
</feature>
<feature type="sequence conflict" description="In Ref. 1; CAB52677." evidence="6" ref="1">
    <original>V</original>
    <variation>F</variation>
    <location>
        <position position="178"/>
    </location>
</feature>
<feature type="sequence conflict" description="In Ref. 1; CAB52677." evidence="6" ref="1">
    <original>T</original>
    <variation>P</variation>
    <location>
        <position position="197"/>
    </location>
</feature>
<feature type="strand" evidence="7">
    <location>
        <begin position="81"/>
        <end position="84"/>
    </location>
</feature>
<feature type="helix" evidence="7">
    <location>
        <begin position="86"/>
        <end position="90"/>
    </location>
</feature>
<feature type="strand" evidence="7">
    <location>
        <begin position="93"/>
        <end position="102"/>
    </location>
</feature>
<feature type="strand" evidence="7">
    <location>
        <begin position="104"/>
        <end position="107"/>
    </location>
</feature>
<feature type="strand" evidence="7">
    <location>
        <begin position="111"/>
        <end position="116"/>
    </location>
</feature>
<feature type="strand" evidence="7">
    <location>
        <begin position="118"/>
        <end position="126"/>
    </location>
</feature>
<feature type="helix" evidence="7">
    <location>
        <begin position="128"/>
        <end position="141"/>
    </location>
</feature>
<feature type="strand" evidence="7">
    <location>
        <begin position="146"/>
        <end position="151"/>
    </location>
</feature>
<feature type="strand" evidence="7">
    <location>
        <begin position="153"/>
        <end position="155"/>
    </location>
</feature>
<feature type="strand" evidence="7">
    <location>
        <begin position="157"/>
        <end position="166"/>
    </location>
</feature>
<feature type="strand" evidence="7">
    <location>
        <begin position="179"/>
        <end position="183"/>
    </location>
</feature>
<feature type="helix" evidence="7">
    <location>
        <begin position="185"/>
        <end position="187"/>
    </location>
</feature>
<feature type="helix" evidence="7">
    <location>
        <begin position="191"/>
        <end position="194"/>
    </location>
</feature>
<feature type="turn" evidence="8">
    <location>
        <begin position="201"/>
        <end position="203"/>
    </location>
</feature>
<reference key="1">
    <citation type="submission" date="1999-08" db="EMBL/GenBank/DDBJ databases">
        <title>Sequences and map position of 31 Arabidopsis thaliana cDNAs encoding organellar polypeptides.</title>
        <authorList>
            <person name="Legen J."/>
            <person name="Misera S."/>
            <person name="Herrmann R.G."/>
            <person name="Altschmied L."/>
        </authorList>
    </citation>
    <scope>NUCLEOTIDE SEQUENCE [MRNA]</scope>
    <source>
        <strain>cv. Columbia</strain>
    </source>
</reference>
<reference key="2">
    <citation type="journal article" date="2000" name="Nature">
        <title>Sequence and analysis of chromosome 1 of the plant Arabidopsis thaliana.</title>
        <authorList>
            <person name="Theologis A."/>
            <person name="Ecker J.R."/>
            <person name="Palm C.J."/>
            <person name="Federspiel N.A."/>
            <person name="Kaul S."/>
            <person name="White O."/>
            <person name="Alonso J."/>
            <person name="Altafi H."/>
            <person name="Araujo R."/>
            <person name="Bowman C.L."/>
            <person name="Brooks S.Y."/>
            <person name="Buehler E."/>
            <person name="Chan A."/>
            <person name="Chao Q."/>
            <person name="Chen H."/>
            <person name="Cheuk R.F."/>
            <person name="Chin C.W."/>
            <person name="Chung M.K."/>
            <person name="Conn L."/>
            <person name="Conway A.B."/>
            <person name="Conway A.R."/>
            <person name="Creasy T.H."/>
            <person name="Dewar K."/>
            <person name="Dunn P."/>
            <person name="Etgu P."/>
            <person name="Feldblyum T.V."/>
            <person name="Feng J.-D."/>
            <person name="Fong B."/>
            <person name="Fujii C.Y."/>
            <person name="Gill J.E."/>
            <person name="Goldsmith A.D."/>
            <person name="Haas B."/>
            <person name="Hansen N.F."/>
            <person name="Hughes B."/>
            <person name="Huizar L."/>
            <person name="Hunter J.L."/>
            <person name="Jenkins J."/>
            <person name="Johnson-Hopson C."/>
            <person name="Khan S."/>
            <person name="Khaykin E."/>
            <person name="Kim C.J."/>
            <person name="Koo H.L."/>
            <person name="Kremenetskaia I."/>
            <person name="Kurtz D.B."/>
            <person name="Kwan A."/>
            <person name="Lam B."/>
            <person name="Langin-Hooper S."/>
            <person name="Lee A."/>
            <person name="Lee J.M."/>
            <person name="Lenz C.A."/>
            <person name="Li J.H."/>
            <person name="Li Y.-P."/>
            <person name="Lin X."/>
            <person name="Liu S.X."/>
            <person name="Liu Z.A."/>
            <person name="Luros J.S."/>
            <person name="Maiti R."/>
            <person name="Marziali A."/>
            <person name="Militscher J."/>
            <person name="Miranda M."/>
            <person name="Nguyen M."/>
            <person name="Nierman W.C."/>
            <person name="Osborne B.I."/>
            <person name="Pai G."/>
            <person name="Peterson J."/>
            <person name="Pham P.K."/>
            <person name="Rizzo M."/>
            <person name="Rooney T."/>
            <person name="Rowley D."/>
            <person name="Sakano H."/>
            <person name="Salzberg S.L."/>
            <person name="Schwartz J.R."/>
            <person name="Shinn P."/>
            <person name="Southwick A.M."/>
            <person name="Sun H."/>
            <person name="Tallon L.J."/>
            <person name="Tambunga G."/>
            <person name="Toriumi M.J."/>
            <person name="Town C.D."/>
            <person name="Utterback T."/>
            <person name="Van Aken S."/>
            <person name="Vaysberg M."/>
            <person name="Vysotskaia V.S."/>
            <person name="Walker M."/>
            <person name="Wu D."/>
            <person name="Yu G."/>
            <person name="Fraser C.M."/>
            <person name="Venter J.C."/>
            <person name="Davis R.W."/>
        </authorList>
    </citation>
    <scope>NUCLEOTIDE SEQUENCE [LARGE SCALE GENOMIC DNA]</scope>
    <source>
        <strain>cv. Columbia</strain>
    </source>
</reference>
<reference key="3">
    <citation type="journal article" date="2017" name="Plant J.">
        <title>Araport11: a complete reannotation of the Arabidopsis thaliana reference genome.</title>
        <authorList>
            <person name="Cheng C.Y."/>
            <person name="Krishnakumar V."/>
            <person name="Chan A.P."/>
            <person name="Thibaud-Nissen F."/>
            <person name="Schobel S."/>
            <person name="Town C.D."/>
        </authorList>
    </citation>
    <scope>GENOME REANNOTATION</scope>
    <source>
        <strain>cv. Columbia</strain>
    </source>
</reference>
<reference key="4">
    <citation type="journal article" date="2003" name="Science">
        <title>Empirical analysis of transcriptional activity in the Arabidopsis genome.</title>
        <authorList>
            <person name="Yamada K."/>
            <person name="Lim J."/>
            <person name="Dale J.M."/>
            <person name="Chen H."/>
            <person name="Shinn P."/>
            <person name="Palm C.J."/>
            <person name="Southwick A.M."/>
            <person name="Wu H.C."/>
            <person name="Kim C.J."/>
            <person name="Nguyen M."/>
            <person name="Pham P.K."/>
            <person name="Cheuk R.F."/>
            <person name="Karlin-Newmann G."/>
            <person name="Liu S.X."/>
            <person name="Lam B."/>
            <person name="Sakano H."/>
            <person name="Wu T."/>
            <person name="Yu G."/>
            <person name="Miranda M."/>
            <person name="Quach H.L."/>
            <person name="Tripp M."/>
            <person name="Chang C.H."/>
            <person name="Lee J.M."/>
            <person name="Toriumi M.J."/>
            <person name="Chan M.M."/>
            <person name="Tang C.C."/>
            <person name="Onodera C.S."/>
            <person name="Deng J.M."/>
            <person name="Akiyama K."/>
            <person name="Ansari Y."/>
            <person name="Arakawa T."/>
            <person name="Banh J."/>
            <person name="Banno F."/>
            <person name="Bowser L."/>
            <person name="Brooks S.Y."/>
            <person name="Carninci P."/>
            <person name="Chao Q."/>
            <person name="Choy N."/>
            <person name="Enju A."/>
            <person name="Goldsmith A.D."/>
            <person name="Gurjal M."/>
            <person name="Hansen N.F."/>
            <person name="Hayashizaki Y."/>
            <person name="Johnson-Hopson C."/>
            <person name="Hsuan V.W."/>
            <person name="Iida K."/>
            <person name="Karnes M."/>
            <person name="Khan S."/>
            <person name="Koesema E."/>
            <person name="Ishida J."/>
            <person name="Jiang P.X."/>
            <person name="Jones T."/>
            <person name="Kawai J."/>
            <person name="Kamiya A."/>
            <person name="Meyers C."/>
            <person name="Nakajima M."/>
            <person name="Narusaka M."/>
            <person name="Seki M."/>
            <person name="Sakurai T."/>
            <person name="Satou M."/>
            <person name="Tamse R."/>
            <person name="Vaysberg M."/>
            <person name="Wallender E.K."/>
            <person name="Wong C."/>
            <person name="Yamamura Y."/>
            <person name="Yuan S."/>
            <person name="Shinozaki K."/>
            <person name="Davis R.W."/>
            <person name="Theologis A."/>
            <person name="Ecker J.R."/>
        </authorList>
    </citation>
    <scope>NUCLEOTIDE SEQUENCE [LARGE SCALE MRNA]</scope>
    <source>
        <strain>cv. Columbia</strain>
    </source>
</reference>
<reference key="5">
    <citation type="submission" date="2002-03" db="EMBL/GenBank/DDBJ databases">
        <title>Full-length cDNA from Arabidopsis thaliana.</title>
        <authorList>
            <person name="Brover V.V."/>
            <person name="Troukhan M.E."/>
            <person name="Alexandrov N.A."/>
            <person name="Lu Y.-P."/>
            <person name="Flavell R.B."/>
            <person name="Feldmann K.A."/>
        </authorList>
    </citation>
    <scope>NUCLEOTIDE SEQUENCE [LARGE SCALE MRNA]</scope>
</reference>
<reference key="6">
    <citation type="journal article" date="2008" name="Cell Res.">
        <title>Construction of a chloroplast protein interaction network and functional mining of photosynthetic proteins in Arabidopsis thaliana.</title>
        <authorList>
            <person name="Yu Q.B."/>
            <person name="Li G."/>
            <person name="Wang G."/>
            <person name="Sun J.C."/>
            <person name="Wang P.C."/>
            <person name="Wang C."/>
            <person name="Mi H.L."/>
            <person name="Ma W.M."/>
            <person name="Cui J."/>
            <person name="Cui Y.L."/>
            <person name="Chong K."/>
            <person name="Li Y.X."/>
            <person name="Li Y.H."/>
            <person name="Zhao Z."/>
            <person name="Shi T.L."/>
            <person name="Yang Z.N."/>
        </authorList>
    </citation>
    <scope>INTERACTION WITH CURT1C</scope>
</reference>
<evidence type="ECO:0000250" key="1"/>
<evidence type="ECO:0000250" key="2">
    <source>
        <dbReference type="UniProtKB" id="Q9S7H1"/>
    </source>
</evidence>
<evidence type="ECO:0000255" key="3"/>
<evidence type="ECO:0000256" key="4">
    <source>
        <dbReference type="SAM" id="MobiDB-lite"/>
    </source>
</evidence>
<evidence type="ECO:0000269" key="5">
    <source>
    </source>
</evidence>
<evidence type="ECO:0000305" key="6"/>
<evidence type="ECO:0007829" key="7">
    <source>
        <dbReference type="PDB" id="8J6Z"/>
    </source>
</evidence>
<evidence type="ECO:0007829" key="8">
    <source>
        <dbReference type="PDB" id="8J7A"/>
    </source>
</evidence>
<protein>
    <recommendedName>
        <fullName>Photosystem I reaction center subunit II-2, chloroplastic</fullName>
    </recommendedName>
    <alternativeName>
        <fullName>Photosystem I 20 kDa subunit 2</fullName>
        <shortName>PSI-D2</shortName>
    </alternativeName>
</protein>
<comment type="function">
    <text evidence="1">PSAD can form complexes with ferredoxin and ferredoxin-oxidoreductase in photosystem I (PS I) reaction center. PSAD may encode the ferredoxin-docking protein (By similarity).</text>
</comment>
<comment type="subunit">
    <text evidence="5">Interacts with CURT1C.</text>
</comment>
<comment type="interaction">
    <interactant intactId="EBI-2008727">
        <id>Q9SA56</id>
    </interactant>
    <interactant intactId="EBI-25506855">
        <id>O23160</id>
        <label>MYB73</label>
    </interactant>
    <organismsDiffer>false</organismsDiffer>
    <experiments>3</experiments>
</comment>
<comment type="subcellular location">
    <subcellularLocation>
        <location evidence="1">Plastid</location>
        <location evidence="1">Chloroplast thylakoid membrane</location>
        <topology evidence="1">Peripheral membrane protein</topology>
        <orientation evidence="1">Stromal side</orientation>
    </subcellularLocation>
</comment>
<comment type="similarity">
    <text evidence="6">Belongs to the PsaD family.</text>
</comment>
<keyword id="KW-0002">3D-structure</keyword>
<keyword id="KW-0150">Chloroplast</keyword>
<keyword id="KW-0472">Membrane</keyword>
<keyword id="KW-0597">Phosphoprotein</keyword>
<keyword id="KW-0602">Photosynthesis</keyword>
<keyword id="KW-0603">Photosystem I</keyword>
<keyword id="KW-0934">Plastid</keyword>
<keyword id="KW-1185">Reference proteome</keyword>
<keyword id="KW-0793">Thylakoid</keyword>
<keyword id="KW-0809">Transit peptide</keyword>
<name>PSAD2_ARATH</name>
<organism>
    <name type="scientific">Arabidopsis thaliana</name>
    <name type="common">Mouse-ear cress</name>
    <dbReference type="NCBI Taxonomy" id="3702"/>
    <lineage>
        <taxon>Eukaryota</taxon>
        <taxon>Viridiplantae</taxon>
        <taxon>Streptophyta</taxon>
        <taxon>Embryophyta</taxon>
        <taxon>Tracheophyta</taxon>
        <taxon>Spermatophyta</taxon>
        <taxon>Magnoliopsida</taxon>
        <taxon>eudicotyledons</taxon>
        <taxon>Gunneridae</taxon>
        <taxon>Pentapetalae</taxon>
        <taxon>rosids</taxon>
        <taxon>malvids</taxon>
        <taxon>Brassicales</taxon>
        <taxon>Brassicaceae</taxon>
        <taxon>Camelineae</taxon>
        <taxon>Arabidopsis</taxon>
    </lineage>
</organism>
<proteinExistence type="evidence at protein level"/>
<sequence>MATQAAGIFSPAITTTTSAVKKLHLFSSSHRPKSLSFTKTAIRAEKTESSSAAPAVKEAPVGFTPPQLDPNTPSPIFAGSTGGLLRKAQVEEFYVITWNSPKEQIFEMPTGGAAIMREGPNLLKLARKEQCLALGTRLRSKYKITYQFYRVFPNGEVQYLHPKDGVYPEKANPGREGVGLNMRSIGKNVSPIEVKFTGKQSYDL</sequence>
<accession>Q9SA56</accession>
<accession>Q9SUI3</accession>
<gene>
    <name type="primary">PSAD2</name>
    <name type="ordered locus">At1g03130</name>
    <name type="ORF">F10O3_4</name>
</gene>
<dbReference type="EMBL" id="AJ245907">
    <property type="protein sequence ID" value="CAB52677.1"/>
    <property type="molecule type" value="mRNA"/>
</dbReference>
<dbReference type="EMBL" id="AC006550">
    <property type="protein sequence ID" value="AAD25795.1"/>
    <property type="molecule type" value="Genomic_DNA"/>
</dbReference>
<dbReference type="EMBL" id="CP002684">
    <property type="protein sequence ID" value="AEE27534.1"/>
    <property type="molecule type" value="Genomic_DNA"/>
</dbReference>
<dbReference type="EMBL" id="AF332413">
    <property type="protein sequence ID" value="AAG48776.1"/>
    <property type="molecule type" value="mRNA"/>
</dbReference>
<dbReference type="EMBL" id="AF324708">
    <property type="protein sequence ID" value="AAG40059.1"/>
    <property type="molecule type" value="mRNA"/>
</dbReference>
<dbReference type="EMBL" id="AY039565">
    <property type="protein sequence ID" value="AAK62620.1"/>
    <property type="molecule type" value="mRNA"/>
</dbReference>
<dbReference type="EMBL" id="BT000856">
    <property type="protein sequence ID" value="AAN38693.1"/>
    <property type="molecule type" value="mRNA"/>
</dbReference>
<dbReference type="EMBL" id="AY086772">
    <property type="protein sequence ID" value="AAM63823.1"/>
    <property type="molecule type" value="mRNA"/>
</dbReference>
<dbReference type="PIR" id="D86162">
    <property type="entry name" value="D86162"/>
</dbReference>
<dbReference type="PDB" id="7WFD">
    <property type="method" value="EM"/>
    <property type="resolution" value="3.25 A"/>
    <property type="chains" value="AD=1-204"/>
</dbReference>
<dbReference type="PDB" id="7WFE">
    <property type="method" value="EM"/>
    <property type="resolution" value="3.25 A"/>
    <property type="chains" value="BD=1-204"/>
</dbReference>
<dbReference type="PDB" id="7WG5">
    <property type="method" value="EM"/>
    <property type="resolution" value="3.89 A"/>
    <property type="chains" value="AD/BD=1-204"/>
</dbReference>
<dbReference type="PDB" id="8J6Z">
    <property type="method" value="EM"/>
    <property type="resolution" value="2.79 A"/>
    <property type="chains" value="D=1-204"/>
</dbReference>
<dbReference type="PDB" id="8J7A">
    <property type="method" value="EM"/>
    <property type="resolution" value="3.06 A"/>
    <property type="chains" value="D=1-204"/>
</dbReference>
<dbReference type="PDB" id="8J7B">
    <property type="method" value="EM"/>
    <property type="resolution" value="3.22 A"/>
    <property type="chains" value="D=1-204"/>
</dbReference>
<dbReference type="PDBsum" id="7WFD"/>
<dbReference type="PDBsum" id="7WFE"/>
<dbReference type="PDBsum" id="7WG5"/>
<dbReference type="PDBsum" id="8J6Z"/>
<dbReference type="PDBsum" id="8J7A"/>
<dbReference type="PDBsum" id="8J7B"/>
<dbReference type="EMDB" id="EMD-32462"/>
<dbReference type="EMDB" id="EMD-32463"/>
<dbReference type="EMDB" id="EMD-32477"/>
<dbReference type="EMDB" id="EMD-36021"/>
<dbReference type="EMDB" id="EMD-36036"/>
<dbReference type="EMDB" id="EMD-36037"/>
<dbReference type="SMR" id="Q9SA56"/>
<dbReference type="BioGRID" id="23639">
    <property type="interactions" value="17"/>
</dbReference>
<dbReference type="FunCoup" id="Q9SA56">
    <property type="interactions" value="901"/>
</dbReference>
<dbReference type="IntAct" id="Q9SA56">
    <property type="interactions" value="14"/>
</dbReference>
<dbReference type="STRING" id="3702.Q9SA56"/>
<dbReference type="TCDB" id="5.B.4.1.1">
    <property type="family name" value="the plant photosystem i supercomplex (psi) family"/>
</dbReference>
<dbReference type="iPTMnet" id="Q9SA56"/>
<dbReference type="PaxDb" id="3702-AT1G03130.1"/>
<dbReference type="ProteomicsDB" id="226389"/>
<dbReference type="EnsemblPlants" id="AT1G03130.1">
    <property type="protein sequence ID" value="AT1G03130.1"/>
    <property type="gene ID" value="AT1G03130"/>
</dbReference>
<dbReference type="Gramene" id="AT1G03130.1">
    <property type="protein sequence ID" value="AT1G03130.1"/>
    <property type="gene ID" value="AT1G03130"/>
</dbReference>
<dbReference type="KEGG" id="ath:AT1G03130"/>
<dbReference type="Araport" id="AT1G03130"/>
<dbReference type="TAIR" id="AT1G03130">
    <property type="gene designation" value="PSAD-2"/>
</dbReference>
<dbReference type="eggNOG" id="ENOG502QQIC">
    <property type="taxonomic scope" value="Eukaryota"/>
</dbReference>
<dbReference type="HOGENOM" id="CLU_087107_0_0_1"/>
<dbReference type="InParanoid" id="Q9SA56"/>
<dbReference type="OMA" id="MAMATQP"/>
<dbReference type="OrthoDB" id="44at2759"/>
<dbReference type="PhylomeDB" id="Q9SA56"/>
<dbReference type="PRO" id="PR:Q9SA56"/>
<dbReference type="Proteomes" id="UP000006548">
    <property type="component" value="Chromosome 1"/>
</dbReference>
<dbReference type="ExpressionAtlas" id="Q9SA56">
    <property type="expression patterns" value="baseline and differential"/>
</dbReference>
<dbReference type="GO" id="GO:0009941">
    <property type="term" value="C:chloroplast envelope"/>
    <property type="evidence" value="ECO:0007005"/>
    <property type="project" value="TAIR"/>
</dbReference>
<dbReference type="GO" id="GO:0009534">
    <property type="term" value="C:chloroplast thylakoid"/>
    <property type="evidence" value="ECO:0007005"/>
    <property type="project" value="TAIR"/>
</dbReference>
<dbReference type="GO" id="GO:0009535">
    <property type="term" value="C:chloroplast thylakoid membrane"/>
    <property type="evidence" value="ECO:0007005"/>
    <property type="project" value="TAIR"/>
</dbReference>
<dbReference type="GO" id="GO:0005576">
    <property type="term" value="C:extracellular region"/>
    <property type="evidence" value="ECO:0007005"/>
    <property type="project" value="TAIR"/>
</dbReference>
<dbReference type="GO" id="GO:0009538">
    <property type="term" value="C:photosystem I reaction center"/>
    <property type="evidence" value="ECO:0007669"/>
    <property type="project" value="InterPro"/>
</dbReference>
<dbReference type="GO" id="GO:0009579">
    <property type="term" value="C:thylakoid"/>
    <property type="evidence" value="ECO:0007005"/>
    <property type="project" value="TAIR"/>
</dbReference>
<dbReference type="GO" id="GO:0003729">
    <property type="term" value="F:mRNA binding"/>
    <property type="evidence" value="ECO:0000314"/>
    <property type="project" value="TAIR"/>
</dbReference>
<dbReference type="GO" id="GO:0019904">
    <property type="term" value="F:protein domain specific binding"/>
    <property type="evidence" value="ECO:0000353"/>
    <property type="project" value="CAFA"/>
</dbReference>
<dbReference type="GO" id="GO:0015979">
    <property type="term" value="P:photosynthesis"/>
    <property type="evidence" value="ECO:0007669"/>
    <property type="project" value="UniProtKB-KW"/>
</dbReference>
<dbReference type="FunFam" id="3.30.1470.10:FF:000002">
    <property type="entry name" value="Photosystem I reaction center subunit II"/>
    <property type="match status" value="1"/>
</dbReference>
<dbReference type="Gene3D" id="3.30.1470.10">
    <property type="entry name" value="Photosystem I PsaD, reaction center subunit II"/>
    <property type="match status" value="1"/>
</dbReference>
<dbReference type="InterPro" id="IPR003685">
    <property type="entry name" value="PsaD"/>
</dbReference>
<dbReference type="InterPro" id="IPR036579">
    <property type="entry name" value="PsaD_sf"/>
</dbReference>
<dbReference type="PANTHER" id="PTHR31982">
    <property type="entry name" value="PHOTOSYSTEM I REACTION CENTER SUBUNIT II-1, CHLOROPLASTIC-RELATED"/>
    <property type="match status" value="1"/>
</dbReference>
<dbReference type="PANTHER" id="PTHR31982:SF6">
    <property type="entry name" value="PHOTOSYSTEM I REACTION CENTER SUBUNIT II-1, CHLOROPLASTIC-RELATED"/>
    <property type="match status" value="1"/>
</dbReference>
<dbReference type="Pfam" id="PF02531">
    <property type="entry name" value="PsaD"/>
    <property type="match status" value="1"/>
</dbReference>
<dbReference type="SUPFAM" id="SSF64234">
    <property type="entry name" value="Photosystem I subunit PsaD"/>
    <property type="match status" value="1"/>
</dbReference>